<organism>
    <name type="scientific">Ralstonia nicotianae (strain ATCC BAA-1114 / GMI1000)</name>
    <name type="common">Ralstonia solanacearum</name>
    <dbReference type="NCBI Taxonomy" id="267608"/>
    <lineage>
        <taxon>Bacteria</taxon>
        <taxon>Pseudomonadati</taxon>
        <taxon>Pseudomonadota</taxon>
        <taxon>Betaproteobacteria</taxon>
        <taxon>Burkholderiales</taxon>
        <taxon>Burkholderiaceae</taxon>
        <taxon>Ralstonia</taxon>
        <taxon>Ralstonia solanacearum species complex</taxon>
    </lineage>
</organism>
<reference key="1">
    <citation type="journal article" date="2002" name="Nature">
        <title>Genome sequence of the plant pathogen Ralstonia solanacearum.</title>
        <authorList>
            <person name="Salanoubat M."/>
            <person name="Genin S."/>
            <person name="Artiguenave F."/>
            <person name="Gouzy J."/>
            <person name="Mangenot S."/>
            <person name="Arlat M."/>
            <person name="Billault A."/>
            <person name="Brottier P."/>
            <person name="Camus J.-C."/>
            <person name="Cattolico L."/>
            <person name="Chandler M."/>
            <person name="Choisne N."/>
            <person name="Claudel-Renard C."/>
            <person name="Cunnac S."/>
            <person name="Demange N."/>
            <person name="Gaspin C."/>
            <person name="Lavie M."/>
            <person name="Moisan A."/>
            <person name="Robert C."/>
            <person name="Saurin W."/>
            <person name="Schiex T."/>
            <person name="Siguier P."/>
            <person name="Thebault P."/>
            <person name="Whalen M."/>
            <person name="Wincker P."/>
            <person name="Levy M."/>
            <person name="Weissenbach J."/>
            <person name="Boucher C.A."/>
        </authorList>
    </citation>
    <scope>NUCLEOTIDE SEQUENCE [LARGE SCALE GENOMIC DNA]</scope>
    <source>
        <strain>ATCC BAA-1114 / GMI1000</strain>
    </source>
</reference>
<keyword id="KW-0030">Aminoacyl-tRNA synthetase</keyword>
<keyword id="KW-0067">ATP-binding</keyword>
<keyword id="KW-0963">Cytoplasm</keyword>
<keyword id="KW-0436">Ligase</keyword>
<keyword id="KW-0547">Nucleotide-binding</keyword>
<keyword id="KW-0648">Protein biosynthesis</keyword>
<keyword id="KW-1185">Reference proteome</keyword>
<gene>
    <name evidence="1" type="primary">hisS</name>
    <name type="ordered locus">RSc1216</name>
    <name type="ORF">RS02790</name>
</gene>
<evidence type="ECO:0000255" key="1">
    <source>
        <dbReference type="HAMAP-Rule" id="MF_00127"/>
    </source>
</evidence>
<dbReference type="EC" id="6.1.1.21" evidence="1"/>
<dbReference type="EMBL" id="AL646052">
    <property type="protein sequence ID" value="CAD14918.1"/>
    <property type="molecule type" value="Genomic_DNA"/>
</dbReference>
<dbReference type="SMR" id="Q8Y029"/>
<dbReference type="STRING" id="267608.RSc1216"/>
<dbReference type="EnsemblBacteria" id="CAD14918">
    <property type="protein sequence ID" value="CAD14918"/>
    <property type="gene ID" value="RSc1216"/>
</dbReference>
<dbReference type="KEGG" id="rso:RSc1216"/>
<dbReference type="eggNOG" id="COG0124">
    <property type="taxonomic scope" value="Bacteria"/>
</dbReference>
<dbReference type="HOGENOM" id="CLU_025113_1_1_4"/>
<dbReference type="Proteomes" id="UP000001436">
    <property type="component" value="Chromosome"/>
</dbReference>
<dbReference type="GO" id="GO:0005737">
    <property type="term" value="C:cytoplasm"/>
    <property type="evidence" value="ECO:0007669"/>
    <property type="project" value="UniProtKB-SubCell"/>
</dbReference>
<dbReference type="GO" id="GO:0005524">
    <property type="term" value="F:ATP binding"/>
    <property type="evidence" value="ECO:0007669"/>
    <property type="project" value="UniProtKB-UniRule"/>
</dbReference>
<dbReference type="GO" id="GO:0004821">
    <property type="term" value="F:histidine-tRNA ligase activity"/>
    <property type="evidence" value="ECO:0007669"/>
    <property type="project" value="UniProtKB-UniRule"/>
</dbReference>
<dbReference type="GO" id="GO:0006427">
    <property type="term" value="P:histidyl-tRNA aminoacylation"/>
    <property type="evidence" value="ECO:0007669"/>
    <property type="project" value="UniProtKB-UniRule"/>
</dbReference>
<dbReference type="CDD" id="cd00773">
    <property type="entry name" value="HisRS-like_core"/>
    <property type="match status" value="1"/>
</dbReference>
<dbReference type="CDD" id="cd00859">
    <property type="entry name" value="HisRS_anticodon"/>
    <property type="match status" value="1"/>
</dbReference>
<dbReference type="FunFam" id="3.30.930.10:FF:000005">
    <property type="entry name" value="Histidine--tRNA ligase"/>
    <property type="match status" value="1"/>
</dbReference>
<dbReference type="Gene3D" id="3.40.50.800">
    <property type="entry name" value="Anticodon-binding domain"/>
    <property type="match status" value="1"/>
</dbReference>
<dbReference type="Gene3D" id="3.30.930.10">
    <property type="entry name" value="Bira Bifunctional Protein, Domain 2"/>
    <property type="match status" value="1"/>
</dbReference>
<dbReference type="HAMAP" id="MF_00127">
    <property type="entry name" value="His_tRNA_synth"/>
    <property type="match status" value="1"/>
</dbReference>
<dbReference type="InterPro" id="IPR006195">
    <property type="entry name" value="aa-tRNA-synth_II"/>
</dbReference>
<dbReference type="InterPro" id="IPR045864">
    <property type="entry name" value="aa-tRNA-synth_II/BPL/LPL"/>
</dbReference>
<dbReference type="InterPro" id="IPR004154">
    <property type="entry name" value="Anticodon-bd"/>
</dbReference>
<dbReference type="InterPro" id="IPR036621">
    <property type="entry name" value="Anticodon-bd_dom_sf"/>
</dbReference>
<dbReference type="InterPro" id="IPR015807">
    <property type="entry name" value="His-tRNA-ligase"/>
</dbReference>
<dbReference type="InterPro" id="IPR041715">
    <property type="entry name" value="HisRS-like_core"/>
</dbReference>
<dbReference type="InterPro" id="IPR004516">
    <property type="entry name" value="HisRS/HisZ"/>
</dbReference>
<dbReference type="InterPro" id="IPR033656">
    <property type="entry name" value="HisRS_anticodon"/>
</dbReference>
<dbReference type="NCBIfam" id="TIGR00442">
    <property type="entry name" value="hisS"/>
    <property type="match status" value="1"/>
</dbReference>
<dbReference type="PANTHER" id="PTHR43707:SF1">
    <property type="entry name" value="HISTIDINE--TRNA LIGASE, MITOCHONDRIAL-RELATED"/>
    <property type="match status" value="1"/>
</dbReference>
<dbReference type="PANTHER" id="PTHR43707">
    <property type="entry name" value="HISTIDYL-TRNA SYNTHETASE"/>
    <property type="match status" value="1"/>
</dbReference>
<dbReference type="Pfam" id="PF03129">
    <property type="entry name" value="HGTP_anticodon"/>
    <property type="match status" value="1"/>
</dbReference>
<dbReference type="Pfam" id="PF13393">
    <property type="entry name" value="tRNA-synt_His"/>
    <property type="match status" value="1"/>
</dbReference>
<dbReference type="PIRSF" id="PIRSF001549">
    <property type="entry name" value="His-tRNA_synth"/>
    <property type="match status" value="1"/>
</dbReference>
<dbReference type="SUPFAM" id="SSF52954">
    <property type="entry name" value="Class II aaRS ABD-related"/>
    <property type="match status" value="1"/>
</dbReference>
<dbReference type="SUPFAM" id="SSF55681">
    <property type="entry name" value="Class II aaRS and biotin synthetases"/>
    <property type="match status" value="1"/>
</dbReference>
<dbReference type="PROSITE" id="PS50862">
    <property type="entry name" value="AA_TRNA_LIGASE_II"/>
    <property type="match status" value="1"/>
</dbReference>
<feature type="chain" id="PRO_0000136233" description="Histidine--tRNA ligase">
    <location>
        <begin position="1"/>
        <end position="432"/>
    </location>
</feature>
<name>SYH_RALN1</name>
<sequence>MQKIAGVKGMNDLLPGDAPLWEHFDNAVRSMLRAYGYQQIRTPIVEQTQLFVRGIGEVTDIVEKEMYSFTDALNGEQLTMRPEGTAAAVRAVIEHNLLYDGPKRLWYTGPMFRHEKPQRGRYRQFHQVGVEALGFAGPDIDAEVILMCQRLWDDLGLVGLKLELNSLGQAEERAAHRADLIKYLEGFQDILDEDSKRRLYTNPLRVLDTKNPALQEMAAGAPKLIDYLGEESCAHFEGVQKLLKANNIPFTINPRLVRGLDYYNLTVFEWTTDKLGAQGTVAGGGRYDPLIEQIGGKPAPACGWAMGVERIIELLREENLAPEPQGSDVYIVHQGDEAQVQALVAAERLRDAGLDVILHASAEGRNGSFKSQFKRADASGAAYAVIIGDDEVASGVVQIKPLRGDPNADAQQTVPSDQLVDRLIDAMVANSD</sequence>
<comment type="catalytic activity">
    <reaction evidence="1">
        <text>tRNA(His) + L-histidine + ATP = L-histidyl-tRNA(His) + AMP + diphosphate + H(+)</text>
        <dbReference type="Rhea" id="RHEA:17313"/>
        <dbReference type="Rhea" id="RHEA-COMP:9665"/>
        <dbReference type="Rhea" id="RHEA-COMP:9689"/>
        <dbReference type="ChEBI" id="CHEBI:15378"/>
        <dbReference type="ChEBI" id="CHEBI:30616"/>
        <dbReference type="ChEBI" id="CHEBI:33019"/>
        <dbReference type="ChEBI" id="CHEBI:57595"/>
        <dbReference type="ChEBI" id="CHEBI:78442"/>
        <dbReference type="ChEBI" id="CHEBI:78527"/>
        <dbReference type="ChEBI" id="CHEBI:456215"/>
        <dbReference type="EC" id="6.1.1.21"/>
    </reaction>
</comment>
<comment type="subunit">
    <text evidence="1">Homodimer.</text>
</comment>
<comment type="subcellular location">
    <subcellularLocation>
        <location evidence="1">Cytoplasm</location>
    </subcellularLocation>
</comment>
<comment type="similarity">
    <text evidence="1">Belongs to the class-II aminoacyl-tRNA synthetase family.</text>
</comment>
<protein>
    <recommendedName>
        <fullName evidence="1">Histidine--tRNA ligase</fullName>
        <ecNumber evidence="1">6.1.1.21</ecNumber>
    </recommendedName>
    <alternativeName>
        <fullName evidence="1">Histidyl-tRNA synthetase</fullName>
        <shortName evidence="1">HisRS</shortName>
    </alternativeName>
</protein>
<accession>Q8Y029</accession>
<proteinExistence type="inferred from homology"/>